<name>RS9_IDILO</name>
<accession>Q5R0K5</accession>
<protein>
    <recommendedName>
        <fullName evidence="1">Small ribosomal subunit protein uS9</fullName>
    </recommendedName>
    <alternativeName>
        <fullName evidence="2">30S ribosomal protein S9</fullName>
    </alternativeName>
</protein>
<keyword id="KW-1185">Reference proteome</keyword>
<keyword id="KW-0687">Ribonucleoprotein</keyword>
<keyword id="KW-0689">Ribosomal protein</keyword>
<feature type="chain" id="PRO_1000051236" description="Small ribosomal subunit protein uS9">
    <location>
        <begin position="1"/>
        <end position="130"/>
    </location>
</feature>
<dbReference type="EMBL" id="AE017340">
    <property type="protein sequence ID" value="AAV81258.1"/>
    <property type="molecule type" value="Genomic_DNA"/>
</dbReference>
<dbReference type="RefSeq" id="WP_011233676.1">
    <property type="nucleotide sequence ID" value="NC_006512.1"/>
</dbReference>
<dbReference type="SMR" id="Q5R0K5"/>
<dbReference type="STRING" id="283942.IL0415"/>
<dbReference type="GeneID" id="41335567"/>
<dbReference type="KEGG" id="ilo:IL0415"/>
<dbReference type="eggNOG" id="COG0103">
    <property type="taxonomic scope" value="Bacteria"/>
</dbReference>
<dbReference type="HOGENOM" id="CLU_046483_2_1_6"/>
<dbReference type="OrthoDB" id="9803965at2"/>
<dbReference type="Proteomes" id="UP000001171">
    <property type="component" value="Chromosome"/>
</dbReference>
<dbReference type="GO" id="GO:0022627">
    <property type="term" value="C:cytosolic small ribosomal subunit"/>
    <property type="evidence" value="ECO:0007669"/>
    <property type="project" value="TreeGrafter"/>
</dbReference>
<dbReference type="GO" id="GO:0003723">
    <property type="term" value="F:RNA binding"/>
    <property type="evidence" value="ECO:0007669"/>
    <property type="project" value="TreeGrafter"/>
</dbReference>
<dbReference type="GO" id="GO:0003735">
    <property type="term" value="F:structural constituent of ribosome"/>
    <property type="evidence" value="ECO:0007669"/>
    <property type="project" value="InterPro"/>
</dbReference>
<dbReference type="GO" id="GO:0006412">
    <property type="term" value="P:translation"/>
    <property type="evidence" value="ECO:0007669"/>
    <property type="project" value="UniProtKB-UniRule"/>
</dbReference>
<dbReference type="FunFam" id="3.30.230.10:FF:000001">
    <property type="entry name" value="30S ribosomal protein S9"/>
    <property type="match status" value="1"/>
</dbReference>
<dbReference type="Gene3D" id="3.30.230.10">
    <property type="match status" value="1"/>
</dbReference>
<dbReference type="HAMAP" id="MF_00532_B">
    <property type="entry name" value="Ribosomal_uS9_B"/>
    <property type="match status" value="1"/>
</dbReference>
<dbReference type="InterPro" id="IPR020568">
    <property type="entry name" value="Ribosomal_Su5_D2-typ_SF"/>
</dbReference>
<dbReference type="InterPro" id="IPR000754">
    <property type="entry name" value="Ribosomal_uS9"/>
</dbReference>
<dbReference type="InterPro" id="IPR023035">
    <property type="entry name" value="Ribosomal_uS9_bac/plastid"/>
</dbReference>
<dbReference type="InterPro" id="IPR020574">
    <property type="entry name" value="Ribosomal_uS9_CS"/>
</dbReference>
<dbReference type="InterPro" id="IPR014721">
    <property type="entry name" value="Ribsml_uS5_D2-typ_fold_subgr"/>
</dbReference>
<dbReference type="NCBIfam" id="NF001099">
    <property type="entry name" value="PRK00132.1"/>
    <property type="match status" value="1"/>
</dbReference>
<dbReference type="PANTHER" id="PTHR21569">
    <property type="entry name" value="RIBOSOMAL PROTEIN S9"/>
    <property type="match status" value="1"/>
</dbReference>
<dbReference type="PANTHER" id="PTHR21569:SF1">
    <property type="entry name" value="SMALL RIBOSOMAL SUBUNIT PROTEIN US9M"/>
    <property type="match status" value="1"/>
</dbReference>
<dbReference type="Pfam" id="PF00380">
    <property type="entry name" value="Ribosomal_S9"/>
    <property type="match status" value="1"/>
</dbReference>
<dbReference type="SUPFAM" id="SSF54211">
    <property type="entry name" value="Ribosomal protein S5 domain 2-like"/>
    <property type="match status" value="1"/>
</dbReference>
<dbReference type="PROSITE" id="PS00360">
    <property type="entry name" value="RIBOSOMAL_S9"/>
    <property type="match status" value="1"/>
</dbReference>
<organism>
    <name type="scientific">Idiomarina loihiensis (strain ATCC BAA-735 / DSM 15497 / L2-TR)</name>
    <dbReference type="NCBI Taxonomy" id="283942"/>
    <lineage>
        <taxon>Bacteria</taxon>
        <taxon>Pseudomonadati</taxon>
        <taxon>Pseudomonadota</taxon>
        <taxon>Gammaproteobacteria</taxon>
        <taxon>Alteromonadales</taxon>
        <taxon>Idiomarinaceae</taxon>
        <taxon>Idiomarina</taxon>
    </lineage>
</organism>
<sequence length="130" mass="14892">MADNQYYGTGRRKNSTARVFLRPGSGNIKINNRELNEYFGRETAQMVVRQPLELVEMTEKFDMYITVSGGGTTGQAGAIRHGITRALMQYDEALRGPLRKEGYVTRDARQVERKKIGLHKARKRPQFSKR</sequence>
<gene>
    <name evidence="1" type="primary">rpsI</name>
    <name type="ordered locus">IL0415</name>
</gene>
<reference key="1">
    <citation type="journal article" date="2004" name="Proc. Natl. Acad. Sci. U.S.A.">
        <title>Genome sequence of the deep-sea gamma-proteobacterium Idiomarina loihiensis reveals amino acid fermentation as a source of carbon and energy.</title>
        <authorList>
            <person name="Hou S."/>
            <person name="Saw J.H."/>
            <person name="Lee K.S."/>
            <person name="Freitas T.A."/>
            <person name="Belisle C."/>
            <person name="Kawarabayasi Y."/>
            <person name="Donachie S.P."/>
            <person name="Pikina A."/>
            <person name="Galperin M.Y."/>
            <person name="Koonin E.V."/>
            <person name="Makarova K.S."/>
            <person name="Omelchenko M.V."/>
            <person name="Sorokin A."/>
            <person name="Wolf Y.I."/>
            <person name="Li Q.X."/>
            <person name="Keum Y.S."/>
            <person name="Campbell S."/>
            <person name="Denery J."/>
            <person name="Aizawa S."/>
            <person name="Shibata S."/>
            <person name="Malahoff A."/>
            <person name="Alam M."/>
        </authorList>
    </citation>
    <scope>NUCLEOTIDE SEQUENCE [LARGE SCALE GENOMIC DNA]</scope>
    <source>
        <strain>ATCC BAA-735 / DSM 15497 / L2-TR</strain>
    </source>
</reference>
<comment type="similarity">
    <text evidence="1">Belongs to the universal ribosomal protein uS9 family.</text>
</comment>
<evidence type="ECO:0000255" key="1">
    <source>
        <dbReference type="HAMAP-Rule" id="MF_00532"/>
    </source>
</evidence>
<evidence type="ECO:0000305" key="2"/>
<proteinExistence type="inferred from homology"/>